<feature type="chain" id="PRO_0000180507" description="DNA primase">
    <location>
        <begin position="1"/>
        <end position="639"/>
    </location>
</feature>
<feature type="domain" description="Toprim" evidence="1">
    <location>
        <begin position="262"/>
        <end position="348"/>
    </location>
</feature>
<feature type="zinc finger region" description="CHC2-type" evidence="1">
    <location>
        <begin position="41"/>
        <end position="65"/>
    </location>
</feature>
<feature type="region of interest" description="Disordered" evidence="2">
    <location>
        <begin position="460"/>
        <end position="479"/>
    </location>
</feature>
<feature type="binding site" evidence="1">
    <location>
        <position position="268"/>
    </location>
    <ligand>
        <name>Mg(2+)</name>
        <dbReference type="ChEBI" id="CHEBI:18420"/>
        <label>1</label>
        <note>catalytic</note>
    </ligand>
</feature>
<feature type="binding site" evidence="1">
    <location>
        <position position="319"/>
    </location>
    <ligand>
        <name>Mg(2+)</name>
        <dbReference type="ChEBI" id="CHEBI:18420"/>
        <label>1</label>
        <note>catalytic</note>
    </ligand>
</feature>
<feature type="binding site" evidence="1">
    <location>
        <position position="319"/>
    </location>
    <ligand>
        <name>Mg(2+)</name>
        <dbReference type="ChEBI" id="CHEBI:18420"/>
        <label>2</label>
    </ligand>
</feature>
<feature type="binding site" evidence="1">
    <location>
        <position position="321"/>
    </location>
    <ligand>
        <name>Mg(2+)</name>
        <dbReference type="ChEBI" id="CHEBI:18420"/>
        <label>2</label>
    </ligand>
</feature>
<name>DNAG_MYCBO</name>
<protein>
    <recommendedName>
        <fullName evidence="1">DNA primase</fullName>
        <ecNumber evidence="1">2.7.7.101</ecNumber>
    </recommendedName>
</protein>
<proteinExistence type="inferred from homology"/>
<reference key="1">
    <citation type="journal article" date="2003" name="Proc. Natl. Acad. Sci. U.S.A.">
        <title>The complete genome sequence of Mycobacterium bovis.</title>
        <authorList>
            <person name="Garnier T."/>
            <person name="Eiglmeier K."/>
            <person name="Camus J.-C."/>
            <person name="Medina N."/>
            <person name="Mansoor H."/>
            <person name="Pryor M."/>
            <person name="Duthoy S."/>
            <person name="Grondin S."/>
            <person name="Lacroix C."/>
            <person name="Monsempe C."/>
            <person name="Simon S."/>
            <person name="Harris B."/>
            <person name="Atkin R."/>
            <person name="Doggett J."/>
            <person name="Mayes R."/>
            <person name="Keating L."/>
            <person name="Wheeler P.R."/>
            <person name="Parkhill J."/>
            <person name="Barrell B.G."/>
            <person name="Cole S.T."/>
            <person name="Gordon S.V."/>
            <person name="Hewinson R.G."/>
        </authorList>
    </citation>
    <scope>NUCLEOTIDE SEQUENCE [LARGE SCALE GENOMIC DNA]</scope>
    <source>
        <strain>ATCC BAA-935 / AF2122/97</strain>
    </source>
</reference>
<reference key="2">
    <citation type="journal article" date="2017" name="Genome Announc.">
        <title>Updated reference genome sequence and annotation of Mycobacterium bovis AF2122/97.</title>
        <authorList>
            <person name="Malone K.M."/>
            <person name="Farrell D."/>
            <person name="Stuber T.P."/>
            <person name="Schubert O.T."/>
            <person name="Aebersold R."/>
            <person name="Robbe-Austerman S."/>
            <person name="Gordon S.V."/>
        </authorList>
    </citation>
    <scope>NUCLEOTIDE SEQUENCE [LARGE SCALE GENOMIC DNA]</scope>
    <scope>GENOME REANNOTATION</scope>
    <source>
        <strain>ATCC BAA-935 / AF2122/97</strain>
    </source>
</reference>
<comment type="function">
    <text evidence="1">RNA polymerase that catalyzes the synthesis of short RNA molecules used as primers for DNA polymerase during DNA replication.</text>
</comment>
<comment type="catalytic activity">
    <reaction evidence="1">
        <text>ssDNA + n NTP = ssDNA/pppN(pN)n-1 hybrid + (n-1) diphosphate.</text>
        <dbReference type="EC" id="2.7.7.101"/>
    </reaction>
</comment>
<comment type="cofactor">
    <cofactor evidence="1">
        <name>Zn(2+)</name>
        <dbReference type="ChEBI" id="CHEBI:29105"/>
    </cofactor>
    <text evidence="1">Binds 1 zinc ion per monomer.</text>
</comment>
<comment type="cofactor">
    <cofactor evidence="1">
        <name>Mg(2+)</name>
        <dbReference type="ChEBI" id="CHEBI:18420"/>
    </cofactor>
    <text evidence="1">Binds two Mg(2+) per subunit.</text>
</comment>
<comment type="subunit">
    <text evidence="1">Monomer. Interacts with DnaB.</text>
</comment>
<comment type="domain">
    <text evidence="1">Contains an N-terminal zinc-binding domain, a central core domain that contains the primase activity, and a C-terminal DnaB-binding domain.</text>
</comment>
<comment type="similarity">
    <text evidence="1">Belongs to the DnaG primase family.</text>
</comment>
<keyword id="KW-0235">DNA replication</keyword>
<keyword id="KW-0238">DNA-binding</keyword>
<keyword id="KW-0240">DNA-directed RNA polymerase</keyword>
<keyword id="KW-0460">Magnesium</keyword>
<keyword id="KW-0479">Metal-binding</keyword>
<keyword id="KW-0548">Nucleotidyltransferase</keyword>
<keyword id="KW-0639">Primosome</keyword>
<keyword id="KW-1185">Reference proteome</keyword>
<keyword id="KW-0804">Transcription</keyword>
<keyword id="KW-0808">Transferase</keyword>
<keyword id="KW-0862">Zinc</keyword>
<keyword id="KW-0863">Zinc-finger</keyword>
<dbReference type="EC" id="2.7.7.101" evidence="1"/>
<dbReference type="EMBL" id="LT708304">
    <property type="protein sequence ID" value="SIU00984.1"/>
    <property type="molecule type" value="Genomic_DNA"/>
</dbReference>
<dbReference type="RefSeq" id="NP_856021.1">
    <property type="nucleotide sequence ID" value="NC_002945.3"/>
</dbReference>
<dbReference type="RefSeq" id="WP_003412049.1">
    <property type="nucleotide sequence ID" value="NC_002945.4"/>
</dbReference>
<dbReference type="SMR" id="P63963"/>
<dbReference type="KEGG" id="mbo:BQ2027_MB2372C"/>
<dbReference type="PATRIC" id="fig|233413.5.peg.2604"/>
<dbReference type="Proteomes" id="UP000001419">
    <property type="component" value="Chromosome"/>
</dbReference>
<dbReference type="GO" id="GO:0005737">
    <property type="term" value="C:cytoplasm"/>
    <property type="evidence" value="ECO:0007669"/>
    <property type="project" value="TreeGrafter"/>
</dbReference>
<dbReference type="GO" id="GO:0000428">
    <property type="term" value="C:DNA-directed RNA polymerase complex"/>
    <property type="evidence" value="ECO:0007669"/>
    <property type="project" value="UniProtKB-KW"/>
</dbReference>
<dbReference type="GO" id="GO:1990077">
    <property type="term" value="C:primosome complex"/>
    <property type="evidence" value="ECO:0007669"/>
    <property type="project" value="UniProtKB-KW"/>
</dbReference>
<dbReference type="GO" id="GO:0003677">
    <property type="term" value="F:DNA binding"/>
    <property type="evidence" value="ECO:0007669"/>
    <property type="project" value="UniProtKB-KW"/>
</dbReference>
<dbReference type="GO" id="GO:0003899">
    <property type="term" value="F:DNA-directed RNA polymerase activity"/>
    <property type="evidence" value="ECO:0007669"/>
    <property type="project" value="InterPro"/>
</dbReference>
<dbReference type="GO" id="GO:0008270">
    <property type="term" value="F:zinc ion binding"/>
    <property type="evidence" value="ECO:0007669"/>
    <property type="project" value="UniProtKB-UniRule"/>
</dbReference>
<dbReference type="GO" id="GO:0006269">
    <property type="term" value="P:DNA replication, synthesis of primer"/>
    <property type="evidence" value="ECO:0007669"/>
    <property type="project" value="UniProtKB-UniRule"/>
</dbReference>
<dbReference type="CDD" id="cd03364">
    <property type="entry name" value="TOPRIM_DnaG_primases"/>
    <property type="match status" value="1"/>
</dbReference>
<dbReference type="FunFam" id="3.40.1360.10:FF:000004">
    <property type="entry name" value="DNA primase"/>
    <property type="match status" value="1"/>
</dbReference>
<dbReference type="FunFam" id="3.90.580.10:FF:000001">
    <property type="entry name" value="DNA primase"/>
    <property type="match status" value="1"/>
</dbReference>
<dbReference type="FunFam" id="3.90.980.10:FF:000001">
    <property type="entry name" value="DNA primase"/>
    <property type="match status" value="1"/>
</dbReference>
<dbReference type="Gene3D" id="3.40.1360.10">
    <property type="match status" value="1"/>
</dbReference>
<dbReference type="Gene3D" id="3.90.980.10">
    <property type="entry name" value="DNA primase, catalytic core, N-terminal domain"/>
    <property type="match status" value="1"/>
</dbReference>
<dbReference type="Gene3D" id="3.90.580.10">
    <property type="entry name" value="Zinc finger, CHC2-type domain"/>
    <property type="match status" value="1"/>
</dbReference>
<dbReference type="HAMAP" id="MF_00974">
    <property type="entry name" value="DNA_primase_DnaG"/>
    <property type="match status" value="1"/>
</dbReference>
<dbReference type="InterPro" id="IPR037068">
    <property type="entry name" value="DNA_primase_core_N_sf"/>
</dbReference>
<dbReference type="InterPro" id="IPR019475">
    <property type="entry name" value="DNA_primase_DnaB-bd"/>
</dbReference>
<dbReference type="InterPro" id="IPR006295">
    <property type="entry name" value="DNA_primase_DnaG"/>
</dbReference>
<dbReference type="InterPro" id="IPR013173">
    <property type="entry name" value="DNA_primase_DnaG_DnaB-bd_dom"/>
</dbReference>
<dbReference type="InterPro" id="IPR036977">
    <property type="entry name" value="DNA_primase_Znf_CHC2"/>
</dbReference>
<dbReference type="InterPro" id="IPR030846">
    <property type="entry name" value="DnaG_bac"/>
</dbReference>
<dbReference type="InterPro" id="IPR013264">
    <property type="entry name" value="DNAG_N"/>
</dbReference>
<dbReference type="InterPro" id="IPR050219">
    <property type="entry name" value="DnaG_primase"/>
</dbReference>
<dbReference type="InterPro" id="IPR034151">
    <property type="entry name" value="TOPRIM_DnaG_bac"/>
</dbReference>
<dbReference type="InterPro" id="IPR006171">
    <property type="entry name" value="TOPRIM_dom"/>
</dbReference>
<dbReference type="InterPro" id="IPR002694">
    <property type="entry name" value="Znf_CHC2"/>
</dbReference>
<dbReference type="NCBIfam" id="TIGR01391">
    <property type="entry name" value="dnaG"/>
    <property type="match status" value="1"/>
</dbReference>
<dbReference type="PANTHER" id="PTHR30313">
    <property type="entry name" value="DNA PRIMASE"/>
    <property type="match status" value="1"/>
</dbReference>
<dbReference type="PANTHER" id="PTHR30313:SF2">
    <property type="entry name" value="DNA PRIMASE"/>
    <property type="match status" value="1"/>
</dbReference>
<dbReference type="Pfam" id="PF10410">
    <property type="entry name" value="DnaB_bind"/>
    <property type="match status" value="1"/>
</dbReference>
<dbReference type="Pfam" id="PF08278">
    <property type="entry name" value="DnaG_DnaB_bind"/>
    <property type="match status" value="1"/>
</dbReference>
<dbReference type="Pfam" id="PF08275">
    <property type="entry name" value="DNAG_N"/>
    <property type="match status" value="1"/>
</dbReference>
<dbReference type="Pfam" id="PF13662">
    <property type="entry name" value="Toprim_4"/>
    <property type="match status" value="1"/>
</dbReference>
<dbReference type="Pfam" id="PF01807">
    <property type="entry name" value="Zn_ribbon_DnaG"/>
    <property type="match status" value="1"/>
</dbReference>
<dbReference type="PIRSF" id="PIRSF002811">
    <property type="entry name" value="DnaG"/>
    <property type="match status" value="1"/>
</dbReference>
<dbReference type="SMART" id="SM00766">
    <property type="entry name" value="DnaG_DnaB_bind"/>
    <property type="match status" value="1"/>
</dbReference>
<dbReference type="SMART" id="SM00493">
    <property type="entry name" value="TOPRIM"/>
    <property type="match status" value="1"/>
</dbReference>
<dbReference type="SMART" id="SM00400">
    <property type="entry name" value="ZnF_CHCC"/>
    <property type="match status" value="1"/>
</dbReference>
<dbReference type="SUPFAM" id="SSF56731">
    <property type="entry name" value="DNA primase core"/>
    <property type="match status" value="1"/>
</dbReference>
<dbReference type="SUPFAM" id="SSF57783">
    <property type="entry name" value="Zinc beta-ribbon"/>
    <property type="match status" value="1"/>
</dbReference>
<dbReference type="PROSITE" id="PS50880">
    <property type="entry name" value="TOPRIM"/>
    <property type="match status" value="1"/>
</dbReference>
<evidence type="ECO:0000255" key="1">
    <source>
        <dbReference type="HAMAP-Rule" id="MF_00974"/>
    </source>
</evidence>
<evidence type="ECO:0000256" key="2">
    <source>
        <dbReference type="SAM" id="MobiDB-lite"/>
    </source>
</evidence>
<accession>P63963</accession>
<accession>A0A1R3Y341</accession>
<accession>P95239</accession>
<accession>X2BKE2</accession>
<gene>
    <name evidence="1" type="primary">dnaG</name>
    <name type="ordered locus">BQ2027_MB2372C</name>
</gene>
<organism>
    <name type="scientific">Mycobacterium bovis (strain ATCC BAA-935 / AF2122/97)</name>
    <dbReference type="NCBI Taxonomy" id="233413"/>
    <lineage>
        <taxon>Bacteria</taxon>
        <taxon>Bacillati</taxon>
        <taxon>Actinomycetota</taxon>
        <taxon>Actinomycetes</taxon>
        <taxon>Mycobacteriales</taxon>
        <taxon>Mycobacteriaceae</taxon>
        <taxon>Mycobacterium</taxon>
        <taxon>Mycobacterium tuberculosis complex</taxon>
    </lineage>
</organism>
<sequence>MSGRISDRDIAAIREGARIEDVVGDYVQLRRAGADSLKGLCPFHNEKSPSFHVRPNHGHFHCFGCGEGGDVYAFIQKIEHVSFVEAVELLADRIGHTISYTGAATSVQRDRGSRSRLLAANAAAAAFYAQALQSDEAAPARQYLTERSFDAAAARKFGCGFAPSGWDSLTKHLQRKGFEFEELEAAGLSRQGRHGPMDRFHRRLLWPIRTSAGEVVGFGARRLFDDDAMEAKYVNTPETLLYKKSSVMFGIDLAKRDIAKGHQAVVVEGYTDVMAMHLAGVTTAVASCGTAFGGEHLAMLRRLMMDDSFFRGELIYVFDGDEAGRAAALKAFDGEQKLAGQSFVAVAPDGMDPCDLRLKCGDAALRDLVARRTPLFEFAIRAAIAEMDLDSAEGRVAALRRCVPMVGQIKDPTLRDEYARQLAGWVGWADVAQVIGRVRGEAKRTKHPRLGRLGSTTIARAAQRPTAGPPTELAVRPDPRDPTLWPQREALKSALQYPALAGPVFDALTVEGFTHPEYAAVRAAIDTAGGTSAGLSGAQWLDMVRQQTTSTVTSALISELGVEAIQVDDDKLPRYIAGVLARLQEVWLGRQIAEVKSKLQRMSPIEQGDEYHALFGDLVAMEAYRRSLLEQASGDDLTA</sequence>